<keyword id="KW-0012">Acyltransferase</keyword>
<keyword id="KW-0997">Cell inner membrane</keyword>
<keyword id="KW-1003">Cell membrane</keyword>
<keyword id="KW-0444">Lipid biosynthesis</keyword>
<keyword id="KW-0443">Lipid metabolism</keyword>
<keyword id="KW-0472">Membrane</keyword>
<keyword id="KW-0594">Phospholipid biosynthesis</keyword>
<keyword id="KW-1208">Phospholipid metabolism</keyword>
<keyword id="KW-1185">Reference proteome</keyword>
<keyword id="KW-0808">Transferase</keyword>
<dbReference type="EC" id="2.3.1.15" evidence="1"/>
<dbReference type="EMBL" id="CP000462">
    <property type="protein sequence ID" value="ABK36673.1"/>
    <property type="molecule type" value="Genomic_DNA"/>
</dbReference>
<dbReference type="RefSeq" id="WP_011704200.1">
    <property type="nucleotide sequence ID" value="NC_008570.1"/>
</dbReference>
<dbReference type="RefSeq" id="YP_854715.1">
    <property type="nucleotide sequence ID" value="NC_008570.1"/>
</dbReference>
<dbReference type="SMR" id="A0KEQ0"/>
<dbReference type="STRING" id="380703.AHA_0182"/>
<dbReference type="EnsemblBacteria" id="ABK36673">
    <property type="protein sequence ID" value="ABK36673"/>
    <property type="gene ID" value="AHA_0182"/>
</dbReference>
<dbReference type="GeneID" id="4486812"/>
<dbReference type="KEGG" id="aha:AHA_0182"/>
<dbReference type="PATRIC" id="fig|380703.7.peg.173"/>
<dbReference type="eggNOG" id="COG2937">
    <property type="taxonomic scope" value="Bacteria"/>
</dbReference>
<dbReference type="HOGENOM" id="CLU_015407_0_0_6"/>
<dbReference type="OrthoDB" id="335193at2"/>
<dbReference type="UniPathway" id="UPA00557">
    <property type="reaction ID" value="UER00612"/>
</dbReference>
<dbReference type="Proteomes" id="UP000000756">
    <property type="component" value="Chromosome"/>
</dbReference>
<dbReference type="GO" id="GO:0005886">
    <property type="term" value="C:plasma membrane"/>
    <property type="evidence" value="ECO:0007669"/>
    <property type="project" value="UniProtKB-SubCell"/>
</dbReference>
<dbReference type="GO" id="GO:0004366">
    <property type="term" value="F:glycerol-3-phosphate O-acyltransferase activity"/>
    <property type="evidence" value="ECO:0007669"/>
    <property type="project" value="UniProtKB-UniRule"/>
</dbReference>
<dbReference type="GO" id="GO:0016024">
    <property type="term" value="P:CDP-diacylglycerol biosynthetic process"/>
    <property type="evidence" value="ECO:0007669"/>
    <property type="project" value="UniProtKB-UniRule"/>
</dbReference>
<dbReference type="GO" id="GO:0006631">
    <property type="term" value="P:fatty acid metabolic process"/>
    <property type="evidence" value="ECO:0007669"/>
    <property type="project" value="TreeGrafter"/>
</dbReference>
<dbReference type="CDD" id="cd07993">
    <property type="entry name" value="LPLAT_DHAPAT-like"/>
    <property type="match status" value="1"/>
</dbReference>
<dbReference type="HAMAP" id="MF_00393">
    <property type="entry name" value="Glyc3P_acyltrans"/>
    <property type="match status" value="1"/>
</dbReference>
<dbReference type="InterPro" id="IPR022284">
    <property type="entry name" value="GPAT/DHAPAT"/>
</dbReference>
<dbReference type="InterPro" id="IPR045520">
    <property type="entry name" value="GPAT/DHAPAT_C"/>
</dbReference>
<dbReference type="InterPro" id="IPR041728">
    <property type="entry name" value="GPAT/DHAPAT_LPLAT"/>
</dbReference>
<dbReference type="InterPro" id="IPR028354">
    <property type="entry name" value="GPAT_PlsB"/>
</dbReference>
<dbReference type="InterPro" id="IPR002123">
    <property type="entry name" value="Plipid/glycerol_acylTrfase"/>
</dbReference>
<dbReference type="NCBIfam" id="TIGR03703">
    <property type="entry name" value="plsB"/>
    <property type="match status" value="1"/>
</dbReference>
<dbReference type="NCBIfam" id="NF003441">
    <property type="entry name" value="PRK04974.1"/>
    <property type="match status" value="1"/>
</dbReference>
<dbReference type="PANTHER" id="PTHR12563:SF17">
    <property type="entry name" value="DIHYDROXYACETONE PHOSPHATE ACYLTRANSFERASE"/>
    <property type="match status" value="1"/>
</dbReference>
<dbReference type="PANTHER" id="PTHR12563">
    <property type="entry name" value="GLYCEROL-3-PHOSPHATE ACYLTRANSFERASE"/>
    <property type="match status" value="1"/>
</dbReference>
<dbReference type="Pfam" id="PF01553">
    <property type="entry name" value="Acyltransferase"/>
    <property type="match status" value="1"/>
</dbReference>
<dbReference type="Pfam" id="PF19277">
    <property type="entry name" value="GPAT_C"/>
    <property type="match status" value="1"/>
</dbReference>
<dbReference type="PIRSF" id="PIRSF500064">
    <property type="entry name" value="GPAT"/>
    <property type="match status" value="1"/>
</dbReference>
<dbReference type="PIRSF" id="PIRSF000437">
    <property type="entry name" value="GPAT_DHAPAT"/>
    <property type="match status" value="1"/>
</dbReference>
<dbReference type="SMART" id="SM00563">
    <property type="entry name" value="PlsC"/>
    <property type="match status" value="1"/>
</dbReference>
<dbReference type="SUPFAM" id="SSF69593">
    <property type="entry name" value="Glycerol-3-phosphate (1)-acyltransferase"/>
    <property type="match status" value="1"/>
</dbReference>
<proteinExistence type="inferred from homology"/>
<evidence type="ECO:0000255" key="1">
    <source>
        <dbReference type="HAMAP-Rule" id="MF_00393"/>
    </source>
</evidence>
<feature type="chain" id="PRO_1000049427" description="Glycerol-3-phosphate acyltransferase">
    <location>
        <begin position="1"/>
        <end position="807"/>
    </location>
</feature>
<feature type="short sequence motif" description="HXXXXD motif">
    <location>
        <begin position="309"/>
        <end position="314"/>
    </location>
</feature>
<organism>
    <name type="scientific">Aeromonas hydrophila subsp. hydrophila (strain ATCC 7966 / DSM 30187 / BCRC 13018 / CCUG 14551 / JCM 1027 / KCTC 2358 / NCIMB 9240 / NCTC 8049)</name>
    <dbReference type="NCBI Taxonomy" id="380703"/>
    <lineage>
        <taxon>Bacteria</taxon>
        <taxon>Pseudomonadati</taxon>
        <taxon>Pseudomonadota</taxon>
        <taxon>Gammaproteobacteria</taxon>
        <taxon>Aeromonadales</taxon>
        <taxon>Aeromonadaceae</taxon>
        <taxon>Aeromonas</taxon>
    </lineage>
</organism>
<name>PLSB_AERHH</name>
<protein>
    <recommendedName>
        <fullName evidence="1">Glycerol-3-phosphate acyltransferase</fullName>
        <shortName evidence="1">GPAT</shortName>
        <ecNumber evidence="1">2.3.1.15</ecNumber>
    </recommendedName>
</protein>
<gene>
    <name evidence="1" type="primary">plsB</name>
    <name type="ordered locus">AHA_0182</name>
</gene>
<comment type="catalytic activity">
    <reaction evidence="1">
        <text>sn-glycerol 3-phosphate + an acyl-CoA = a 1-acyl-sn-glycero-3-phosphate + CoA</text>
        <dbReference type="Rhea" id="RHEA:15325"/>
        <dbReference type="ChEBI" id="CHEBI:57287"/>
        <dbReference type="ChEBI" id="CHEBI:57597"/>
        <dbReference type="ChEBI" id="CHEBI:57970"/>
        <dbReference type="ChEBI" id="CHEBI:58342"/>
        <dbReference type="EC" id="2.3.1.15"/>
    </reaction>
</comment>
<comment type="pathway">
    <text evidence="1">Phospholipid metabolism; CDP-diacylglycerol biosynthesis; CDP-diacylglycerol from sn-glycerol 3-phosphate: step 1/3.</text>
</comment>
<comment type="subcellular location">
    <subcellularLocation>
        <location evidence="1">Cell inner membrane</location>
        <topology evidence="1">Peripheral membrane protein</topology>
        <orientation evidence="1">Cytoplasmic side</orientation>
    </subcellularLocation>
</comment>
<comment type="domain">
    <text evidence="1">The HXXXXD motif is essential for acyltransferase activity and may constitute the binding site for the phosphate moiety of the glycerol-3-phosphate.</text>
</comment>
<comment type="similarity">
    <text evidence="1">Belongs to the GPAT/DAPAT family.</text>
</comment>
<reference key="1">
    <citation type="journal article" date="2006" name="J. Bacteriol.">
        <title>Genome sequence of Aeromonas hydrophila ATCC 7966T: jack of all trades.</title>
        <authorList>
            <person name="Seshadri R."/>
            <person name="Joseph S.W."/>
            <person name="Chopra A.K."/>
            <person name="Sha J."/>
            <person name="Shaw J."/>
            <person name="Graf J."/>
            <person name="Haft D.H."/>
            <person name="Wu M."/>
            <person name="Ren Q."/>
            <person name="Rosovitz M.J."/>
            <person name="Madupu R."/>
            <person name="Tallon L."/>
            <person name="Kim M."/>
            <person name="Jin S."/>
            <person name="Vuong H."/>
            <person name="Stine O.C."/>
            <person name="Ali A."/>
            <person name="Horneman A.J."/>
            <person name="Heidelberg J.F."/>
        </authorList>
    </citation>
    <scope>NUCLEOTIDE SEQUENCE [LARGE SCALE GENOMIC DNA]</scope>
    <source>
        <strain>ATCC 7966 / DSM 30187 / BCRC 13018 / CCUG 14551 / JCM 1027 / KCTC 2358 / NCIMB 9240 / NCTC 8049</strain>
    </source>
</reference>
<accession>A0KEQ0</accession>
<sequence length="807" mass="91472">MSLGQNISRAILQWPVSGLVNHKSLPENPITELKLDPARPIVYALKTSSITDLMTLQQCCEDLGLPGPFTPLELNGQLLPRYVCLDRPPPLFGKRSKPLPFLQEFHQLLDLHKQDPALDIQVVPVTLFWGRAPGREGEEASGWNIISSLAPNRLKKALIVILKGRENLVRFSPPLSLRHMADKHGTDEAIAHKLARVARTHFSRQQLAATGPKLPNRNLLFKQLLDSNVIQQAIEEEAQREGISLEKAQKRAHGYMDEIASDFSYRLIRLGESFLGWLWNKLYRGLSVNGAEKVRQLAQEGHEIVYVPCHRSHMDYLLLSYVIYHQGMVPPHIAAGINLNFWPAGPIFRHGGAFFIRRTFKGNPLYSTVFREYLNLLFAKGYSVEFFTEGGRSRTGRLLPPKTGMLAMTLQAMMRGLDRPVTLVPVYLGYEHVMEVNTYHNELKGSRKEKESFLQVLGILRKLRNYGRGFVNFGEPLTLNNYLNEHVPSWKEHIGEEERPEWMAPTVNQLAELLMTRINGAAAVNGLTLSALALLAAERHALTRDELQAQLNTYLDLLKQVPYSPHSTIPDEDAKTLLDQAMELNKFEVSEDKLGQIVSLDRYQAILLTYYRNNILHLFAMPSLVAALIERCEGISRSEIVARCIDIYPLLKTELFLRYEEDELPELVDALLAELQRQQLIEARDGGFWVNPVNQTRLLLLAESIQETLQRYAIVLTRVLAQPRIEAEQLEADGLMMAERLGTLHGINAPEFFDQKLFSTLIHTLRSEGYLDPGCKPDLGRFQALADNIVPLLSTKIRRTIQAGNRL</sequence>